<reference key="1">
    <citation type="journal article" date="2005" name="Science">
        <title>Life at depth: Photobacterium profundum genome sequence and expression analysis.</title>
        <authorList>
            <person name="Vezzi A."/>
            <person name="Campanaro S."/>
            <person name="D'Angelo M."/>
            <person name="Simonato F."/>
            <person name="Vitulo N."/>
            <person name="Lauro F.M."/>
            <person name="Cestaro A."/>
            <person name="Malacrida G."/>
            <person name="Simionati B."/>
            <person name="Cannata N."/>
            <person name="Romualdi C."/>
            <person name="Bartlett D.H."/>
            <person name="Valle G."/>
        </authorList>
    </citation>
    <scope>NUCLEOTIDE SEQUENCE [LARGE SCALE GENOMIC DNA]</scope>
    <source>
        <strain>ATCC BAA-1253 / SS9</strain>
    </source>
</reference>
<feature type="signal peptide" evidence="1">
    <location>
        <begin position="1"/>
        <end position="21"/>
    </location>
</feature>
<feature type="chain" id="PRO_0000036301" description="UPF0319 protein PBPRA2789">
    <location>
        <begin position="22"/>
        <end position="212"/>
    </location>
</feature>
<name>Y2789_PHOPR</name>
<comment type="similarity">
    <text evidence="1">Belongs to the UPF0319 family.</text>
</comment>
<evidence type="ECO:0000255" key="1">
    <source>
        <dbReference type="HAMAP-Rule" id="MF_00789"/>
    </source>
</evidence>
<accession>P62385</accession>
<keyword id="KW-1185">Reference proteome</keyword>
<keyword id="KW-0732">Signal</keyword>
<gene>
    <name type="ordered locus">PBPRA2789</name>
</gene>
<organism>
    <name type="scientific">Photobacterium profundum (strain SS9)</name>
    <dbReference type="NCBI Taxonomy" id="298386"/>
    <lineage>
        <taxon>Bacteria</taxon>
        <taxon>Pseudomonadati</taxon>
        <taxon>Pseudomonadota</taxon>
        <taxon>Gammaproteobacteria</taxon>
        <taxon>Vibrionales</taxon>
        <taxon>Vibrionaceae</taxon>
        <taxon>Photobacterium</taxon>
    </lineage>
</organism>
<protein>
    <recommendedName>
        <fullName evidence="1">UPF0319 protein PBPRA2789</fullName>
    </recommendedName>
</protein>
<dbReference type="EMBL" id="CR378672">
    <property type="protein sequence ID" value="CAG21161.1"/>
    <property type="molecule type" value="Genomic_DNA"/>
</dbReference>
<dbReference type="STRING" id="298386.PBPRA2789"/>
<dbReference type="KEGG" id="ppr:PBPRA2789"/>
<dbReference type="eggNOG" id="COG3110">
    <property type="taxonomic scope" value="Bacteria"/>
</dbReference>
<dbReference type="HOGENOM" id="CLU_1358070_0_0_6"/>
<dbReference type="Proteomes" id="UP000000593">
    <property type="component" value="Chromosome 1"/>
</dbReference>
<dbReference type="HAMAP" id="MF_00789">
    <property type="entry name" value="UPF0319"/>
    <property type="match status" value="1"/>
</dbReference>
<dbReference type="InterPro" id="IPR018635">
    <property type="entry name" value="UPF0319"/>
</dbReference>
<dbReference type="PANTHER" id="PTHR38108">
    <property type="entry name" value="UPF0319 PROTEIN YCCT"/>
    <property type="match status" value="1"/>
</dbReference>
<dbReference type="PANTHER" id="PTHR38108:SF1">
    <property type="entry name" value="UPF0319 PROTEIN YCCT"/>
    <property type="match status" value="1"/>
</dbReference>
<dbReference type="Pfam" id="PF09829">
    <property type="entry name" value="DUF2057"/>
    <property type="match status" value="1"/>
</dbReference>
<sequence>MKKILLAFTLPLVLASQTAMADVTLKVPGNFEILAAQHLEIKKATKIVALPEGDQQVLVRFDSPTNPHSTGQSMGYVSSQPILIRFSANDGEVVKLVAPRVDTQQDVKRFAKNPSFELTDTAGKSVSFESEKLVVSGSPLMANYNDILAVQVAASTKQTLPQPAVITASSQSVSTVDINQLTPAQADQLMKDLYQNADKKSRKEFIRWALGL</sequence>
<proteinExistence type="inferred from homology"/>